<protein>
    <recommendedName>
        <fullName evidence="7">Extracellular protease inhibitor 10</fullName>
    </recommendedName>
    <alternativeName>
        <fullName evidence="7">Secreted effector EPI10</fullName>
    </alternativeName>
</protein>
<dbReference type="EMBL" id="AY586282">
    <property type="protein sequence ID" value="AAT00509.1"/>
    <property type="molecule type" value="mRNA"/>
</dbReference>
<dbReference type="SMR" id="Q6PQG3"/>
<dbReference type="MEROPS" id="I01.965"/>
<dbReference type="GlyCosmos" id="Q6PQG3">
    <property type="glycosylation" value="2 sites, No reported glycans"/>
</dbReference>
<dbReference type="VEuPathDB" id="FungiDB:PITG_12129"/>
<dbReference type="PHI-base" id="PHI:4252"/>
<dbReference type="GO" id="GO:0005576">
    <property type="term" value="C:extracellular region"/>
    <property type="evidence" value="ECO:0007669"/>
    <property type="project" value="UniProtKB-SubCell"/>
</dbReference>
<dbReference type="GO" id="GO:0004867">
    <property type="term" value="F:serine-type endopeptidase inhibitor activity"/>
    <property type="evidence" value="ECO:0007669"/>
    <property type="project" value="UniProtKB-KW"/>
</dbReference>
<dbReference type="CDD" id="cd00104">
    <property type="entry name" value="KAZAL_FS"/>
    <property type="match status" value="3"/>
</dbReference>
<dbReference type="Gene3D" id="3.30.60.30">
    <property type="match status" value="3"/>
</dbReference>
<dbReference type="InterPro" id="IPR002350">
    <property type="entry name" value="Kazal_dom"/>
</dbReference>
<dbReference type="InterPro" id="IPR036058">
    <property type="entry name" value="Kazal_dom_sf"/>
</dbReference>
<dbReference type="InterPro" id="IPR050653">
    <property type="entry name" value="Prot_Inhib_GrowthFact_Antg"/>
</dbReference>
<dbReference type="PANTHER" id="PTHR10913:SF45">
    <property type="entry name" value="FOLLISTATIN, ISOFORM A-RELATED"/>
    <property type="match status" value="1"/>
</dbReference>
<dbReference type="PANTHER" id="PTHR10913">
    <property type="entry name" value="FOLLISTATIN-RELATED"/>
    <property type="match status" value="1"/>
</dbReference>
<dbReference type="Pfam" id="PF00050">
    <property type="entry name" value="Kazal_1"/>
    <property type="match status" value="1"/>
</dbReference>
<dbReference type="Pfam" id="PF07648">
    <property type="entry name" value="Kazal_2"/>
    <property type="match status" value="2"/>
</dbReference>
<dbReference type="SMART" id="SM00280">
    <property type="entry name" value="KAZAL"/>
    <property type="match status" value="3"/>
</dbReference>
<dbReference type="SUPFAM" id="SSF100895">
    <property type="entry name" value="Kazal-type serine protease inhibitors"/>
    <property type="match status" value="3"/>
</dbReference>
<dbReference type="PROSITE" id="PS51465">
    <property type="entry name" value="KAZAL_2"/>
    <property type="match status" value="3"/>
</dbReference>
<organism>
    <name type="scientific">Phytophthora infestans</name>
    <name type="common">Potato late blight agent</name>
    <name type="synonym">Botrytis infestans</name>
    <dbReference type="NCBI Taxonomy" id="4787"/>
    <lineage>
        <taxon>Eukaryota</taxon>
        <taxon>Sar</taxon>
        <taxon>Stramenopiles</taxon>
        <taxon>Oomycota</taxon>
        <taxon>Peronosporales</taxon>
        <taxon>Peronosporaceae</taxon>
        <taxon>Phytophthora</taxon>
    </lineage>
</organism>
<accession>Q6PQG3</accession>
<gene>
    <name evidence="7" type="primary">EPI10</name>
</gene>
<evidence type="ECO:0000255" key="1"/>
<evidence type="ECO:0000255" key="2">
    <source>
        <dbReference type="PROSITE-ProRule" id="PRU00498"/>
    </source>
</evidence>
<evidence type="ECO:0000255" key="3">
    <source>
        <dbReference type="PROSITE-ProRule" id="PRU00798"/>
    </source>
</evidence>
<evidence type="ECO:0000256" key="4">
    <source>
        <dbReference type="SAM" id="MobiDB-lite"/>
    </source>
</evidence>
<evidence type="ECO:0000269" key="5">
    <source>
    </source>
</evidence>
<evidence type="ECO:0000269" key="6">
    <source>
    </source>
</evidence>
<evidence type="ECO:0000303" key="7">
    <source>
    </source>
</evidence>
<proteinExistence type="evidence at protein level"/>
<keyword id="KW-1015">Disulfide bond</keyword>
<keyword id="KW-0325">Glycoprotein</keyword>
<keyword id="KW-0646">Protease inhibitor</keyword>
<keyword id="KW-0677">Repeat</keyword>
<keyword id="KW-0964">Secreted</keyword>
<keyword id="KW-0722">Serine protease inhibitor</keyword>
<keyword id="KW-0732">Signal</keyword>
<keyword id="KW-0843">Virulence</keyword>
<name>EPI10_PHYIN</name>
<sequence length="224" mass="23481">MKSAFTLSLALVAVTATISAAADDNCSFGCLDVYKPVCGSNGETYSNSCYLRLASCKSNNGITEAGDGECASTPASSATPSPVTSSTGSTSGTVGCPDMCLDVYDPVSDENGKEYSNQCYMEMAKCKGTGYDDNKRSGNPGISTLDAERKLAFAPGYQGPPCGDMLCPDNYAPVCGSDGETYPNECDLGITSCNHPEQNITMVGEGPCPSQEQQQQQQQQQQKL</sequence>
<feature type="signal peptide" evidence="1">
    <location>
        <begin position="1"/>
        <end position="22"/>
    </location>
</feature>
<feature type="chain" id="PRO_5004279619" description="Extracellular protease inhibitor 10">
    <location>
        <begin position="23"/>
        <end position="224"/>
    </location>
</feature>
<feature type="domain" description="Kazal-like 1" evidence="3">
    <location>
        <begin position="23"/>
        <end position="72"/>
    </location>
</feature>
<feature type="domain" description="Kazal-like 2" evidence="3">
    <location>
        <begin position="90"/>
        <end position="127"/>
    </location>
</feature>
<feature type="domain" description="Kazal-like 3" evidence="3">
    <location>
        <begin position="156"/>
        <end position="210"/>
    </location>
</feature>
<feature type="region of interest" description="Disordered" evidence="4">
    <location>
        <begin position="69"/>
        <end position="92"/>
    </location>
</feature>
<feature type="region of interest" description="Disordered" evidence="4">
    <location>
        <begin position="202"/>
        <end position="224"/>
    </location>
</feature>
<feature type="compositionally biased region" description="Low complexity" evidence="4">
    <location>
        <begin position="71"/>
        <end position="92"/>
    </location>
</feature>
<feature type="compositionally biased region" description="Low complexity" evidence="4">
    <location>
        <begin position="211"/>
        <end position="224"/>
    </location>
</feature>
<feature type="site" description="Reactive bond" evidence="3">
    <location>
        <begin position="32"/>
        <end position="33"/>
    </location>
</feature>
<feature type="site" description="Reactive bond" evidence="3">
    <location>
        <begin position="102"/>
        <end position="103"/>
    </location>
</feature>
<feature type="site" description="Reactive bond" evidence="3">
    <location>
        <begin position="169"/>
        <end position="170"/>
    </location>
</feature>
<feature type="glycosylation site" description="N-linked (GlcNAc...) asparagine" evidence="2">
    <location>
        <position position="25"/>
    </location>
</feature>
<feature type="glycosylation site" description="N-linked (GlcNAc...) asparagine" evidence="2">
    <location>
        <position position="199"/>
    </location>
</feature>
<feature type="disulfide bond" evidence="3">
    <location>
        <begin position="26"/>
        <end position="56"/>
    </location>
</feature>
<feature type="disulfide bond" evidence="3">
    <location>
        <begin position="30"/>
        <end position="49"/>
    </location>
</feature>
<feature type="disulfide bond" evidence="3">
    <location>
        <begin position="38"/>
        <end position="70"/>
    </location>
</feature>
<feature type="disulfide bond" evidence="3">
    <location>
        <begin position="96"/>
        <end position="126"/>
    </location>
</feature>
<feature type="disulfide bond" evidence="3">
    <location>
        <begin position="100"/>
        <end position="119"/>
    </location>
</feature>
<feature type="disulfide bond" evidence="3">
    <location>
        <begin position="162"/>
        <end position="193"/>
    </location>
</feature>
<feature type="disulfide bond" evidence="3">
    <location>
        <begin position="167"/>
        <end position="186"/>
    </location>
</feature>
<feature type="disulfide bond" evidence="3">
    <location>
        <begin position="175"/>
        <end position="208"/>
    </location>
</feature>
<reference key="1">
    <citation type="journal article" date="2004" name="J. Biol. Chem.">
        <title>A Kazal-like extracellular serine protease inhibitor from Phytophthora infestans targets the tomato pathogenesis-related protease P69B.</title>
        <authorList>
            <person name="Tian M."/>
            <person name="Huitema E."/>
            <person name="Da Cunha L."/>
            <person name="Torto-Alalibo T."/>
            <person name="Kamoun S."/>
        </authorList>
    </citation>
    <scope>NUCLEOTIDE SEQUENCE [MRNA]</scope>
    <scope>INDUCTION</scope>
    <source>
        <strain>Isolate 88069</strain>
    </source>
</reference>
<reference key="2">
    <citation type="journal article" date="2005" name="Plant Physiol.">
        <title>A Second Kazal-like protease inhibitor from Phytophthora infestans inhibits and interacts with the apoplastic pathogenesis-related protease P69B of tomato.</title>
        <authorList>
            <person name="Tian M."/>
            <person name="Benedetti B."/>
            <person name="Kamoun S."/>
        </authorList>
    </citation>
    <scope>FUNCTION</scope>
    <scope>SUBCELLULAR LOCATION</scope>
    <scope>INTERACTION WITH HOST P69B</scope>
    <scope>INDUCTION</scope>
</reference>
<comment type="function">
    <text evidence="6">Secreted effector that interacts with and inhibits the pathogenesis-related P69B subtilisin-like serine protease of host tomato (PubMed:15980196). Inhibition of host proteases by a pathogen extracellular protease inhibitor forms a specific type of defense-counterdefense mechanism between plants and microbial pathogens (PubMed:15980196).</text>
</comment>
<comment type="subunit">
    <text evidence="6">Interacts with host subtilisin-like protease P69B.</text>
</comment>
<comment type="subcellular location">
    <subcellularLocation>
        <location evidence="6">Secreted</location>
    </subcellularLocation>
    <text evidence="6">Localizes to host apoplast where it targets defense proteases for inhibition.</text>
</comment>
<comment type="induction">
    <text evidence="5 6">Expressed in zoospores (PubMed:15096512). Expressed during host infection (PubMed:15980196).</text>
</comment>